<comment type="function">
    <text evidence="1">Catalyzes the conversion of N-formimidoyl-L-glutamate to L-glutamate and formamide.</text>
</comment>
<comment type="catalytic activity">
    <reaction evidence="1">
        <text>N-formimidoyl-L-glutamate + H2O = formamide + L-glutamate</text>
        <dbReference type="Rhea" id="RHEA:22492"/>
        <dbReference type="ChEBI" id="CHEBI:15377"/>
        <dbReference type="ChEBI" id="CHEBI:16397"/>
        <dbReference type="ChEBI" id="CHEBI:29985"/>
        <dbReference type="ChEBI" id="CHEBI:58928"/>
        <dbReference type="EC" id="3.5.3.8"/>
    </reaction>
</comment>
<comment type="cofactor">
    <cofactor evidence="1">
        <name>Mn(2+)</name>
        <dbReference type="ChEBI" id="CHEBI:29035"/>
    </cofactor>
    <text evidence="1">Binds 2 manganese ions per subunit.</text>
</comment>
<comment type="pathway">
    <text evidence="1">Amino-acid degradation; L-histidine degradation into L-glutamate; L-glutamate from N-formimidoyl-L-glutamate (hydrolase route): step 1/1.</text>
</comment>
<comment type="similarity">
    <text evidence="1">Belongs to the arginase family.</text>
</comment>
<organism>
    <name type="scientific">Enterobacter sp. (strain 638)</name>
    <dbReference type="NCBI Taxonomy" id="399742"/>
    <lineage>
        <taxon>Bacteria</taxon>
        <taxon>Pseudomonadati</taxon>
        <taxon>Pseudomonadota</taxon>
        <taxon>Gammaproteobacteria</taxon>
        <taxon>Enterobacterales</taxon>
        <taxon>Enterobacteriaceae</taxon>
        <taxon>Enterobacter</taxon>
    </lineage>
</organism>
<name>HUTG_ENT38</name>
<keyword id="KW-0369">Histidine metabolism</keyword>
<keyword id="KW-0378">Hydrolase</keyword>
<keyword id="KW-0464">Manganese</keyword>
<keyword id="KW-0479">Metal-binding</keyword>
<evidence type="ECO:0000255" key="1">
    <source>
        <dbReference type="HAMAP-Rule" id="MF_00737"/>
    </source>
</evidence>
<protein>
    <recommendedName>
        <fullName evidence="1">Formimidoylglutamase</fullName>
        <ecNumber evidence="1">3.5.3.8</ecNumber>
    </recommendedName>
    <alternativeName>
        <fullName evidence="1">Formiminoglutamase</fullName>
    </alternativeName>
    <alternativeName>
        <fullName evidence="1">Formiminoglutamate hydrolase</fullName>
    </alternativeName>
</protein>
<accession>A4W8B2</accession>
<dbReference type="EC" id="3.5.3.8" evidence="1"/>
<dbReference type="EMBL" id="CP000653">
    <property type="protein sequence ID" value="ABP59942.1"/>
    <property type="molecule type" value="Genomic_DNA"/>
</dbReference>
<dbReference type="RefSeq" id="WP_012016661.1">
    <property type="nucleotide sequence ID" value="NC_009436.1"/>
</dbReference>
<dbReference type="SMR" id="A4W8B2"/>
<dbReference type="STRING" id="399742.Ent638_1261"/>
<dbReference type="KEGG" id="ent:Ent638_1261"/>
<dbReference type="eggNOG" id="COG0010">
    <property type="taxonomic scope" value="Bacteria"/>
</dbReference>
<dbReference type="HOGENOM" id="CLU_039478_2_0_6"/>
<dbReference type="OrthoDB" id="9789727at2"/>
<dbReference type="UniPathway" id="UPA00379">
    <property type="reaction ID" value="UER00552"/>
</dbReference>
<dbReference type="Proteomes" id="UP000000230">
    <property type="component" value="Chromosome"/>
</dbReference>
<dbReference type="GO" id="GO:0008783">
    <property type="term" value="F:agmatinase activity"/>
    <property type="evidence" value="ECO:0007669"/>
    <property type="project" value="TreeGrafter"/>
</dbReference>
<dbReference type="GO" id="GO:0050415">
    <property type="term" value="F:formimidoylglutamase activity"/>
    <property type="evidence" value="ECO:0007669"/>
    <property type="project" value="UniProtKB-UniRule"/>
</dbReference>
<dbReference type="GO" id="GO:0030145">
    <property type="term" value="F:manganese ion binding"/>
    <property type="evidence" value="ECO:0007669"/>
    <property type="project" value="UniProtKB-UniRule"/>
</dbReference>
<dbReference type="GO" id="GO:0019556">
    <property type="term" value="P:L-histidine catabolic process to glutamate and formamide"/>
    <property type="evidence" value="ECO:0007669"/>
    <property type="project" value="UniProtKB-UniPathway"/>
</dbReference>
<dbReference type="GO" id="GO:0019557">
    <property type="term" value="P:L-histidine catabolic process to glutamate and formate"/>
    <property type="evidence" value="ECO:0007669"/>
    <property type="project" value="UniProtKB-UniPathway"/>
</dbReference>
<dbReference type="GO" id="GO:0033389">
    <property type="term" value="P:putrescine biosynthetic process from arginine, via agmatine"/>
    <property type="evidence" value="ECO:0007669"/>
    <property type="project" value="TreeGrafter"/>
</dbReference>
<dbReference type="CDD" id="cd09988">
    <property type="entry name" value="Formimidoylglutamase"/>
    <property type="match status" value="1"/>
</dbReference>
<dbReference type="Gene3D" id="3.40.800.10">
    <property type="entry name" value="Ureohydrolase domain"/>
    <property type="match status" value="1"/>
</dbReference>
<dbReference type="HAMAP" id="MF_00737">
    <property type="entry name" value="Formimidoylglutam"/>
    <property type="match status" value="1"/>
</dbReference>
<dbReference type="InterPro" id="IPR005923">
    <property type="entry name" value="HutG"/>
</dbReference>
<dbReference type="InterPro" id="IPR006035">
    <property type="entry name" value="Ureohydrolase"/>
</dbReference>
<dbReference type="InterPro" id="IPR023696">
    <property type="entry name" value="Ureohydrolase_dom_sf"/>
</dbReference>
<dbReference type="InterPro" id="IPR020855">
    <property type="entry name" value="Ureohydrolase_Mn_BS"/>
</dbReference>
<dbReference type="NCBIfam" id="TIGR01227">
    <property type="entry name" value="hutG"/>
    <property type="match status" value="1"/>
</dbReference>
<dbReference type="PANTHER" id="PTHR11358">
    <property type="entry name" value="ARGINASE/AGMATINASE"/>
    <property type="match status" value="1"/>
</dbReference>
<dbReference type="PANTHER" id="PTHR11358:SF35">
    <property type="entry name" value="FORMIMIDOYLGLUTAMASE"/>
    <property type="match status" value="1"/>
</dbReference>
<dbReference type="Pfam" id="PF00491">
    <property type="entry name" value="Arginase"/>
    <property type="match status" value="1"/>
</dbReference>
<dbReference type="PIRSF" id="PIRSF036979">
    <property type="entry name" value="Arginase"/>
    <property type="match status" value="1"/>
</dbReference>
<dbReference type="SUPFAM" id="SSF52768">
    <property type="entry name" value="Arginase/deacetylase"/>
    <property type="match status" value="1"/>
</dbReference>
<dbReference type="PROSITE" id="PS01053">
    <property type="entry name" value="ARGINASE_1"/>
    <property type="match status" value="1"/>
</dbReference>
<dbReference type="PROSITE" id="PS51409">
    <property type="entry name" value="ARGINASE_2"/>
    <property type="match status" value="1"/>
</dbReference>
<feature type="chain" id="PRO_1000062143" description="Formimidoylglutamase">
    <location>
        <begin position="1"/>
        <end position="312"/>
    </location>
</feature>
<feature type="binding site" evidence="1">
    <location>
        <position position="128"/>
    </location>
    <ligand>
        <name>Mn(2+)</name>
        <dbReference type="ChEBI" id="CHEBI:29035"/>
        <label>1</label>
    </ligand>
</feature>
<feature type="binding site" evidence="1">
    <location>
        <position position="153"/>
    </location>
    <ligand>
        <name>Mn(2+)</name>
        <dbReference type="ChEBI" id="CHEBI:29035"/>
        <label>1</label>
    </ligand>
</feature>
<feature type="binding site" evidence="1">
    <location>
        <position position="153"/>
    </location>
    <ligand>
        <name>Mn(2+)</name>
        <dbReference type="ChEBI" id="CHEBI:29035"/>
        <label>2</label>
    </ligand>
</feature>
<feature type="binding site" evidence="1">
    <location>
        <position position="155"/>
    </location>
    <ligand>
        <name>Mn(2+)</name>
        <dbReference type="ChEBI" id="CHEBI:29035"/>
        <label>2</label>
    </ligand>
</feature>
<feature type="binding site" evidence="1">
    <location>
        <position position="157"/>
    </location>
    <ligand>
        <name>Mn(2+)</name>
        <dbReference type="ChEBI" id="CHEBI:29035"/>
        <label>1</label>
    </ligand>
</feature>
<feature type="binding site" evidence="1">
    <location>
        <position position="240"/>
    </location>
    <ligand>
        <name>Mn(2+)</name>
        <dbReference type="ChEBI" id="CHEBI:29035"/>
        <label>1</label>
    </ligand>
</feature>
<feature type="binding site" evidence="1">
    <location>
        <position position="240"/>
    </location>
    <ligand>
        <name>Mn(2+)</name>
        <dbReference type="ChEBI" id="CHEBI:29035"/>
        <label>2</label>
    </ligand>
</feature>
<feature type="binding site" evidence="1">
    <location>
        <position position="242"/>
    </location>
    <ligand>
        <name>Mn(2+)</name>
        <dbReference type="ChEBI" id="CHEBI:29035"/>
        <label>2</label>
    </ligand>
</feature>
<sequence length="312" mass="34146">MTLWRPTPSDIWQGRDDRAEASNALRIFQTLRQSEHFIPANSGIALMGFASDEGVKRNHGRTGAAQAPDVLRKALANMASHHGHDRLVDMGTFTVEADQLEAAQHALSDGVQACQQAGMRTLVFGGGHETAWAHGRGVLEAFPDDRVVIINLDAHLDLRNAERATSGTPFRQLAQYCAARQREFQYACFGVSRAGNTQALWDEAGRLNVTLVEDLHFRRDALSTLDAVLAQADRVYLTLDLDVLPAGEMPAVSAPAALGIPALDLLPVIEQICRSGKLQAADLVEFNPLYDREGQGARLAARLAWQIAHWWA</sequence>
<gene>
    <name evidence="1" type="primary">hutG</name>
    <name type="ordered locus">Ent638_1261</name>
</gene>
<reference key="1">
    <citation type="journal article" date="2010" name="PLoS Genet.">
        <title>Genome sequence of the plant growth promoting endophytic bacterium Enterobacter sp. 638.</title>
        <authorList>
            <person name="Taghavi S."/>
            <person name="van der Lelie D."/>
            <person name="Hoffman A."/>
            <person name="Zhang Y.B."/>
            <person name="Walla M.D."/>
            <person name="Vangronsveld J."/>
            <person name="Newman L."/>
            <person name="Monchy S."/>
        </authorList>
    </citation>
    <scope>NUCLEOTIDE SEQUENCE [LARGE SCALE GENOMIC DNA]</scope>
    <source>
        <strain>638</strain>
    </source>
</reference>
<proteinExistence type="inferred from homology"/>